<keyword id="KW-0997">Cell inner membrane</keyword>
<keyword id="KW-1003">Cell membrane</keyword>
<keyword id="KW-0472">Membrane</keyword>
<keyword id="KW-0479">Metal-binding</keyword>
<keyword id="KW-0813">Transport</keyword>
<keyword id="KW-0862">Zinc</keyword>
<reference key="1">
    <citation type="submission" date="2006-12" db="EMBL/GenBank/DDBJ databases">
        <title>Complete sequence of Acidovorax avenae subsp. citrulli AAC00-1.</title>
        <authorList>
            <person name="Copeland A."/>
            <person name="Lucas S."/>
            <person name="Lapidus A."/>
            <person name="Barry K."/>
            <person name="Detter J.C."/>
            <person name="Glavina del Rio T."/>
            <person name="Dalin E."/>
            <person name="Tice H."/>
            <person name="Pitluck S."/>
            <person name="Kiss H."/>
            <person name="Brettin T."/>
            <person name="Bruce D."/>
            <person name="Han C."/>
            <person name="Tapia R."/>
            <person name="Gilna P."/>
            <person name="Schmutz J."/>
            <person name="Larimer F."/>
            <person name="Land M."/>
            <person name="Hauser L."/>
            <person name="Kyrpides N."/>
            <person name="Kim E."/>
            <person name="Stahl D."/>
            <person name="Richardson P."/>
        </authorList>
    </citation>
    <scope>NUCLEOTIDE SEQUENCE [LARGE SCALE GENOMIC DNA]</scope>
    <source>
        <strain>AAC00-1</strain>
    </source>
</reference>
<comment type="function">
    <text evidence="1">Part of an energy-coupled inorganic carbon pump.</text>
</comment>
<comment type="cofactor">
    <cofactor evidence="1">
        <name>Zn(2+)</name>
        <dbReference type="ChEBI" id="CHEBI:29105"/>
    </cofactor>
</comment>
<comment type="subunit">
    <text evidence="1">Forms a complex with DabB.</text>
</comment>
<comment type="subcellular location">
    <subcellularLocation>
        <location evidence="1">Cell inner membrane</location>
        <topology evidence="1">Peripheral membrane protein</topology>
    </subcellularLocation>
</comment>
<comment type="similarity">
    <text evidence="1">Belongs to the inorganic carbon transporter (TC 9.A.2) DabA family.</text>
</comment>
<accession>A1TUD6</accession>
<sequence>MHTDTLEHDALARAGAHARIQAACAQACSAIAPAWPLDRAIAVNPHWQRTGQPLRRVAARMALLGGIQVFPPRERQREAWQGGRITPQDLALALQRLPDAAGLAEADCVAALDRPGGLQPLPLLIDVLDNDPARDTRLTWRQAITHQVSQTCAAFFDRAQADWQPERGPGLYAFWRDTLTHDHGIGTLMGLPGLHRGVQALPATREDAEAWAMHHLQLQGGAWADYLEAVLLTVNGWASWCAYLAWQAPEGAPEREHLRDLLAIRLAWGAVLLECKDDAAARQAFAALQAEWRRAPERLQQAEQALVVDEVWQLALELGYQRELAGRLVRAPGLPSAVPEAQAVFCIDVRSEPLRRALEATAPTLQTLGFAGFFGVPAAYTPLGTAARRPQLPGLLPPAMEVTDQLPDPGAAVTARHRRLAWAAQWESTTRWPGAAFSFVEALGAGYLGKLGGWLWPREQARDSGDHAGLPARYRPVCRPMLSGLSLEERAALAARVLKALGLARGAAPLVMLVGHGSQSANNAQAAALDCGACCGQTGEVNARALALLLNDAEVRTALPALGIALPEATCFVAALHNTTTDEIEGFDLDLLPPEARARWERWQPVFSAAGDRVRRERAPSLGLDARAAAGDLLSALRRRANDGAQTRPEWGLAGNAAFVIAPRSRTRDAELGGRAFLHDYDPAQDTDGSLLELLMTAPMLVTHWINWQYHASTCDPERLGSGNKLLHNVVGGHIGVFEGNGGDLRIGLSRQSLHDGQRWVHEPLRLTVVIDAPAAAIEAVIGKHSVLQQLLDHGWLHLWRFGDAGLERREGGRWFAQDAGASGA</sequence>
<proteinExistence type="inferred from homology"/>
<gene>
    <name evidence="1" type="primary">dabA</name>
    <name type="ordered locus">Aave_4033</name>
</gene>
<feature type="chain" id="PRO_0000387229" description="Probable inorganic carbon transporter subunit DabA">
    <location>
        <begin position="1"/>
        <end position="825"/>
    </location>
</feature>
<feature type="binding site" evidence="1">
    <location>
        <position position="346"/>
    </location>
    <ligand>
        <name>Zn(2+)</name>
        <dbReference type="ChEBI" id="CHEBI:29105"/>
    </ligand>
</feature>
<feature type="binding site" evidence="1">
    <location>
        <position position="348"/>
    </location>
    <ligand>
        <name>Zn(2+)</name>
        <dbReference type="ChEBI" id="CHEBI:29105"/>
    </ligand>
</feature>
<feature type="binding site" evidence="1">
    <location>
        <position position="516"/>
    </location>
    <ligand>
        <name>Zn(2+)</name>
        <dbReference type="ChEBI" id="CHEBI:29105"/>
    </ligand>
</feature>
<feature type="binding site" evidence="1">
    <location>
        <position position="531"/>
    </location>
    <ligand>
        <name>Zn(2+)</name>
        <dbReference type="ChEBI" id="CHEBI:29105"/>
    </ligand>
</feature>
<protein>
    <recommendedName>
        <fullName evidence="1">Probable inorganic carbon transporter subunit DabA</fullName>
    </recommendedName>
</protein>
<name>DABA_PARC0</name>
<organism>
    <name type="scientific">Paracidovorax citrulli (strain AAC00-1)</name>
    <name type="common">Acidovorax citrulli</name>
    <dbReference type="NCBI Taxonomy" id="397945"/>
    <lineage>
        <taxon>Bacteria</taxon>
        <taxon>Pseudomonadati</taxon>
        <taxon>Pseudomonadota</taxon>
        <taxon>Betaproteobacteria</taxon>
        <taxon>Burkholderiales</taxon>
        <taxon>Comamonadaceae</taxon>
        <taxon>Paracidovorax</taxon>
    </lineage>
</organism>
<evidence type="ECO:0000255" key="1">
    <source>
        <dbReference type="HAMAP-Rule" id="MF_01871"/>
    </source>
</evidence>
<dbReference type="EMBL" id="CP000512">
    <property type="protein sequence ID" value="ABM34574.1"/>
    <property type="molecule type" value="Genomic_DNA"/>
</dbReference>
<dbReference type="RefSeq" id="WP_011797060.1">
    <property type="nucleotide sequence ID" value="NC_008752.1"/>
</dbReference>
<dbReference type="STRING" id="397945.Aave_4033"/>
<dbReference type="KEGG" id="aav:Aave_4033"/>
<dbReference type="eggNOG" id="COG3002">
    <property type="taxonomic scope" value="Bacteria"/>
</dbReference>
<dbReference type="HOGENOM" id="CLU_009885_1_0_4"/>
<dbReference type="OrthoDB" id="9805101at2"/>
<dbReference type="Proteomes" id="UP000002596">
    <property type="component" value="Chromosome"/>
</dbReference>
<dbReference type="GO" id="GO:0005886">
    <property type="term" value="C:plasma membrane"/>
    <property type="evidence" value="ECO:0007669"/>
    <property type="project" value="UniProtKB-SubCell"/>
</dbReference>
<dbReference type="GO" id="GO:0008270">
    <property type="term" value="F:zinc ion binding"/>
    <property type="evidence" value="ECO:0007669"/>
    <property type="project" value="UniProtKB-UniRule"/>
</dbReference>
<dbReference type="HAMAP" id="MF_01871">
    <property type="entry name" value="DabA"/>
    <property type="match status" value="1"/>
</dbReference>
<dbReference type="InterPro" id="IPR018752">
    <property type="entry name" value="DabA"/>
</dbReference>
<dbReference type="PANTHER" id="PTHR38344:SF1">
    <property type="entry name" value="INORGANIC CARBON TRANSPORTER SUBUNIT DABA-RELATED"/>
    <property type="match status" value="1"/>
</dbReference>
<dbReference type="PANTHER" id="PTHR38344">
    <property type="entry name" value="UPF0753 PROTEIN AQ_863"/>
    <property type="match status" value="1"/>
</dbReference>
<dbReference type="Pfam" id="PF10070">
    <property type="entry name" value="DabA"/>
    <property type="match status" value="1"/>
</dbReference>